<accession>Q05100</accession>
<name>U1141_GAHVG</name>
<protein>
    <recommendedName>
        <fullName>Uncharacterized protein US1141</fullName>
    </recommendedName>
</protein>
<proteinExistence type="predicted"/>
<gene>
    <name type="primary">US1141</name>
</gene>
<sequence>MNRYRYESIFFRYISSTRMILIICLLLGTGDMSAMGLKKDNSPIIPTLHPKGNENLRATLNEYKIPSPLFDTLDNSYETKHVIYTDNCSFAVLNPFGDPKYTLLSLLLMGRRKYDALVAWFVLGRACGRPIYLREYANCSTNEPFGTCKLKSLGWWDRRYAMTSYIDRDELKLIIAAPSRELSGLYTRLIIINGEPISSDILLTVKGTCSFSRRGIKDNKLCKPFSFFVNGTTRLLDMVRTGTPRAHEENVKQWLERNGGKHLPIVVETSMQQVSNLPRSFRDSYLKSPDDDKYNDVKMTSATTNNITTSVDGYTGLTNRPEDFEKAPYITKRPIISVEEASSQSPKISTEKKSRTQIIISLVVLCVMFCFIVIGSGIWI</sequence>
<reference key="1">
    <citation type="journal article" date="1992" name="Virus Genes">
        <title>Sequence determination and genetic content of an 8.9-kb restriction fragment in the short unique region and the internal inverted repeat of Marek's disease virus type 1 DNA.</title>
        <authorList>
            <person name="Sakaguchi M."/>
            <person name="Urakawa T."/>
            <person name="Hirayama Y."/>
            <person name="Miki N."/>
            <person name="Yamamoto M."/>
            <person name="Hirai K."/>
        </authorList>
    </citation>
    <scope>NUCLEOTIDE SEQUENCE [GENOMIC DNA]</scope>
</reference>
<dbReference type="EMBL" id="M80595">
    <property type="protein sequence ID" value="AAB59897.1"/>
    <property type="molecule type" value="Genomic_DNA"/>
</dbReference>
<dbReference type="SMR" id="Q05100"/>
<dbReference type="GO" id="GO:0016020">
    <property type="term" value="C:membrane"/>
    <property type="evidence" value="ECO:0007669"/>
    <property type="project" value="InterPro"/>
</dbReference>
<dbReference type="Gene3D" id="2.70.230.10">
    <property type="match status" value="1"/>
</dbReference>
<dbReference type="InterPro" id="IPR002896">
    <property type="entry name" value="Herpes_glycop_dom"/>
</dbReference>
<dbReference type="InterPro" id="IPR036179">
    <property type="entry name" value="Ig-like_dom_sf"/>
</dbReference>
<dbReference type="Pfam" id="PF01537">
    <property type="entry name" value="Herpes_glycop_D"/>
    <property type="match status" value="1"/>
</dbReference>
<dbReference type="SUPFAM" id="SSF48726">
    <property type="entry name" value="Immunoglobulin"/>
    <property type="match status" value="1"/>
</dbReference>
<organism>
    <name type="scientific">Gallid herpesvirus 2 (strain GA)</name>
    <name type="common">GaHV-2</name>
    <name type="synonym">Marek's disease herpesvirus type 1</name>
    <dbReference type="NCBI Taxonomy" id="10388"/>
    <lineage>
        <taxon>Viruses</taxon>
        <taxon>Duplodnaviria</taxon>
        <taxon>Heunggongvirae</taxon>
        <taxon>Peploviricota</taxon>
        <taxon>Herviviricetes</taxon>
        <taxon>Herpesvirales</taxon>
        <taxon>Orthoherpesviridae</taxon>
        <taxon>Alphaherpesvirinae</taxon>
        <taxon>Mardivirus</taxon>
        <taxon>Mardivirus gallidalpha2</taxon>
        <taxon>Gallid alphaherpesvirus 2</taxon>
    </lineage>
</organism>
<organismHost>
    <name type="scientific">Gallus gallus</name>
    <name type="common">Chicken</name>
    <dbReference type="NCBI Taxonomy" id="9031"/>
</organismHost>
<feature type="chain" id="PRO_0000116349" description="Uncharacterized protein US1141">
    <location>
        <begin position="1"/>
        <end position="380" status="greater than"/>
    </location>
</feature>
<feature type="non-terminal residue">
    <location>
        <position position="380"/>
    </location>
</feature>